<accession>Q0VMY5</accession>
<feature type="chain" id="PRO_1000057892" description="Bifunctional purine biosynthesis protein PurH">
    <location>
        <begin position="1"/>
        <end position="525"/>
    </location>
</feature>
<feature type="domain" description="MGS-like" evidence="2">
    <location>
        <begin position="1"/>
        <end position="145"/>
    </location>
</feature>
<protein>
    <recommendedName>
        <fullName evidence="1">Bifunctional purine biosynthesis protein PurH</fullName>
    </recommendedName>
    <domain>
        <recommendedName>
            <fullName evidence="1">Phosphoribosylaminoimidazolecarboxamide formyltransferase</fullName>
            <ecNumber evidence="1">2.1.2.3</ecNumber>
        </recommendedName>
        <alternativeName>
            <fullName evidence="1">AICAR transformylase</fullName>
        </alternativeName>
    </domain>
    <domain>
        <recommendedName>
            <fullName evidence="1">IMP cyclohydrolase</fullName>
            <ecNumber evidence="1">3.5.4.10</ecNumber>
        </recommendedName>
        <alternativeName>
            <fullName evidence="1">ATIC</fullName>
        </alternativeName>
        <alternativeName>
            <fullName evidence="1">IMP synthase</fullName>
        </alternativeName>
        <alternativeName>
            <fullName evidence="1">Inosinicase</fullName>
        </alternativeName>
    </domain>
</protein>
<proteinExistence type="inferred from homology"/>
<comment type="catalytic activity">
    <reaction evidence="1">
        <text>(6R)-10-formyltetrahydrofolate + 5-amino-1-(5-phospho-beta-D-ribosyl)imidazole-4-carboxamide = 5-formamido-1-(5-phospho-D-ribosyl)imidazole-4-carboxamide + (6S)-5,6,7,8-tetrahydrofolate</text>
        <dbReference type="Rhea" id="RHEA:22192"/>
        <dbReference type="ChEBI" id="CHEBI:57453"/>
        <dbReference type="ChEBI" id="CHEBI:58467"/>
        <dbReference type="ChEBI" id="CHEBI:58475"/>
        <dbReference type="ChEBI" id="CHEBI:195366"/>
        <dbReference type="EC" id="2.1.2.3"/>
    </reaction>
</comment>
<comment type="catalytic activity">
    <reaction evidence="1">
        <text>IMP + H2O = 5-formamido-1-(5-phospho-D-ribosyl)imidazole-4-carboxamide</text>
        <dbReference type="Rhea" id="RHEA:18445"/>
        <dbReference type="ChEBI" id="CHEBI:15377"/>
        <dbReference type="ChEBI" id="CHEBI:58053"/>
        <dbReference type="ChEBI" id="CHEBI:58467"/>
        <dbReference type="EC" id="3.5.4.10"/>
    </reaction>
</comment>
<comment type="pathway">
    <text evidence="1">Purine metabolism; IMP biosynthesis via de novo pathway; 5-formamido-1-(5-phospho-D-ribosyl)imidazole-4-carboxamide from 5-amino-1-(5-phospho-D-ribosyl)imidazole-4-carboxamide (10-formyl THF route): step 1/1.</text>
</comment>
<comment type="pathway">
    <text evidence="1">Purine metabolism; IMP biosynthesis via de novo pathway; IMP from 5-formamido-1-(5-phospho-D-ribosyl)imidazole-4-carboxamide: step 1/1.</text>
</comment>
<comment type="domain">
    <text evidence="1">The IMP cyclohydrolase activity resides in the N-terminal region.</text>
</comment>
<comment type="similarity">
    <text evidence="1">Belongs to the PurH family.</text>
</comment>
<sequence length="525" mass="56122">MSNVERALISVSDKTGIVEFAQALADKGVELLSTGGTFKKLQEAGIAVREVSDYTGFPEMMAGRVKTLHPKVHGGILGRRGQDEQVMADNDISPIDLVVVNLYPFEATVANPDCSLEDAIENIDIGGPTMVRSAAKNNASVGIVTDAADYQRVLDDMAANNGALSDDLRFDLAIKAFEHTAAYDSAIANYFGKKVEGQDGMSNLDFPRTINLNFEKTQNMRYGENPHQKAAFYTERNPAPASIATAKQLQGKELSYNNIADTDAALECVKGFTKPACVIVKHANPCGVAVSLDGITTAYDLAFATDTESAFGGIIAFNRKLDAATAQAIVDRQFVEVIIAPSATEEALAITAAKKNVRVLVCGEMEGVAASGLDYKRVNGGLLVQDRDLGMITEGELKVVTKRAPTEAEMHDLIFAWKVAKFVKSNAIVYAKDRQTVGVGAGQMSRVNSARIAAIKAEHAGLQVKGSVMASDAFFPFRDGIDNAAKVGISCVIQPGGSIRDEEVIAAADEAGMAMVFTGMRHFRH</sequence>
<reference key="1">
    <citation type="journal article" date="2006" name="Nat. Biotechnol.">
        <title>Genome sequence of the ubiquitous hydrocarbon-degrading marine bacterium Alcanivorax borkumensis.</title>
        <authorList>
            <person name="Schneiker S."/>
            <person name="Martins dos Santos V.A.P."/>
            <person name="Bartels D."/>
            <person name="Bekel T."/>
            <person name="Brecht M."/>
            <person name="Buhrmester J."/>
            <person name="Chernikova T.N."/>
            <person name="Denaro R."/>
            <person name="Ferrer M."/>
            <person name="Gertler C."/>
            <person name="Goesmann A."/>
            <person name="Golyshina O.V."/>
            <person name="Kaminski F."/>
            <person name="Khachane A.N."/>
            <person name="Lang S."/>
            <person name="Linke B."/>
            <person name="McHardy A.C."/>
            <person name="Meyer F."/>
            <person name="Nechitaylo T."/>
            <person name="Puehler A."/>
            <person name="Regenhardt D."/>
            <person name="Rupp O."/>
            <person name="Sabirova J.S."/>
            <person name="Selbitschka W."/>
            <person name="Yakimov M.M."/>
            <person name="Timmis K.N."/>
            <person name="Vorhoelter F.-J."/>
            <person name="Weidner S."/>
            <person name="Kaiser O."/>
            <person name="Golyshin P.N."/>
        </authorList>
    </citation>
    <scope>NUCLEOTIDE SEQUENCE [LARGE SCALE GENOMIC DNA]</scope>
    <source>
        <strain>ATCC 700651 / DSM 11573 / NCIMB 13689 / SK2</strain>
    </source>
</reference>
<organism>
    <name type="scientific">Alcanivorax borkumensis (strain ATCC 700651 / DSM 11573 / NCIMB 13689 / SK2)</name>
    <dbReference type="NCBI Taxonomy" id="393595"/>
    <lineage>
        <taxon>Bacteria</taxon>
        <taxon>Pseudomonadati</taxon>
        <taxon>Pseudomonadota</taxon>
        <taxon>Gammaproteobacteria</taxon>
        <taxon>Oceanospirillales</taxon>
        <taxon>Alcanivoracaceae</taxon>
        <taxon>Alcanivorax</taxon>
    </lineage>
</organism>
<gene>
    <name evidence="1" type="primary">purH</name>
    <name type="ordered locus">ABO_2015</name>
</gene>
<dbReference type="EC" id="2.1.2.3" evidence="1"/>
<dbReference type="EC" id="3.5.4.10" evidence="1"/>
<dbReference type="EMBL" id="AM286690">
    <property type="protein sequence ID" value="CAL17463.1"/>
    <property type="molecule type" value="Genomic_DNA"/>
</dbReference>
<dbReference type="RefSeq" id="WP_011589294.1">
    <property type="nucleotide sequence ID" value="NC_008260.1"/>
</dbReference>
<dbReference type="SMR" id="Q0VMY5"/>
<dbReference type="STRING" id="393595.ABO_2015"/>
<dbReference type="KEGG" id="abo:ABO_2015"/>
<dbReference type="eggNOG" id="COG0138">
    <property type="taxonomic scope" value="Bacteria"/>
</dbReference>
<dbReference type="HOGENOM" id="CLU_016316_5_2_6"/>
<dbReference type="OrthoDB" id="9802065at2"/>
<dbReference type="UniPathway" id="UPA00074">
    <property type="reaction ID" value="UER00133"/>
</dbReference>
<dbReference type="UniPathway" id="UPA00074">
    <property type="reaction ID" value="UER00135"/>
</dbReference>
<dbReference type="Proteomes" id="UP000008871">
    <property type="component" value="Chromosome"/>
</dbReference>
<dbReference type="GO" id="GO:0005829">
    <property type="term" value="C:cytosol"/>
    <property type="evidence" value="ECO:0007669"/>
    <property type="project" value="TreeGrafter"/>
</dbReference>
<dbReference type="GO" id="GO:0003937">
    <property type="term" value="F:IMP cyclohydrolase activity"/>
    <property type="evidence" value="ECO:0007669"/>
    <property type="project" value="UniProtKB-UniRule"/>
</dbReference>
<dbReference type="GO" id="GO:0004643">
    <property type="term" value="F:phosphoribosylaminoimidazolecarboxamide formyltransferase activity"/>
    <property type="evidence" value="ECO:0007669"/>
    <property type="project" value="UniProtKB-UniRule"/>
</dbReference>
<dbReference type="GO" id="GO:0006189">
    <property type="term" value="P:'de novo' IMP biosynthetic process"/>
    <property type="evidence" value="ECO:0007669"/>
    <property type="project" value="UniProtKB-UniRule"/>
</dbReference>
<dbReference type="CDD" id="cd01421">
    <property type="entry name" value="IMPCH"/>
    <property type="match status" value="1"/>
</dbReference>
<dbReference type="FunFam" id="3.40.140.20:FF:000001">
    <property type="entry name" value="Bifunctional purine biosynthesis protein PurH"/>
    <property type="match status" value="1"/>
</dbReference>
<dbReference type="FunFam" id="3.40.140.20:FF:000002">
    <property type="entry name" value="Bifunctional purine biosynthesis protein PurH"/>
    <property type="match status" value="1"/>
</dbReference>
<dbReference type="FunFam" id="3.40.50.1380:FF:000001">
    <property type="entry name" value="Bifunctional purine biosynthesis protein PurH"/>
    <property type="match status" value="1"/>
</dbReference>
<dbReference type="Gene3D" id="3.40.140.20">
    <property type="match status" value="2"/>
</dbReference>
<dbReference type="Gene3D" id="3.40.50.1380">
    <property type="entry name" value="Methylglyoxal synthase-like domain"/>
    <property type="match status" value="1"/>
</dbReference>
<dbReference type="HAMAP" id="MF_00139">
    <property type="entry name" value="PurH"/>
    <property type="match status" value="1"/>
</dbReference>
<dbReference type="InterPro" id="IPR024051">
    <property type="entry name" value="AICAR_Tfase_dup_dom_sf"/>
</dbReference>
<dbReference type="InterPro" id="IPR016193">
    <property type="entry name" value="Cytidine_deaminase-like"/>
</dbReference>
<dbReference type="InterPro" id="IPR011607">
    <property type="entry name" value="MGS-like_dom"/>
</dbReference>
<dbReference type="InterPro" id="IPR036914">
    <property type="entry name" value="MGS-like_dom_sf"/>
</dbReference>
<dbReference type="InterPro" id="IPR002695">
    <property type="entry name" value="PurH-like"/>
</dbReference>
<dbReference type="NCBIfam" id="NF002049">
    <property type="entry name" value="PRK00881.1"/>
    <property type="match status" value="1"/>
</dbReference>
<dbReference type="NCBIfam" id="TIGR00355">
    <property type="entry name" value="purH"/>
    <property type="match status" value="1"/>
</dbReference>
<dbReference type="PANTHER" id="PTHR11692:SF0">
    <property type="entry name" value="BIFUNCTIONAL PURINE BIOSYNTHESIS PROTEIN ATIC"/>
    <property type="match status" value="1"/>
</dbReference>
<dbReference type="PANTHER" id="PTHR11692">
    <property type="entry name" value="BIFUNCTIONAL PURINE BIOSYNTHESIS PROTEIN PURH"/>
    <property type="match status" value="1"/>
</dbReference>
<dbReference type="Pfam" id="PF01808">
    <property type="entry name" value="AICARFT_IMPCHas"/>
    <property type="match status" value="1"/>
</dbReference>
<dbReference type="Pfam" id="PF02142">
    <property type="entry name" value="MGS"/>
    <property type="match status" value="1"/>
</dbReference>
<dbReference type="PIRSF" id="PIRSF000414">
    <property type="entry name" value="AICARFT_IMPCHas"/>
    <property type="match status" value="1"/>
</dbReference>
<dbReference type="SMART" id="SM00798">
    <property type="entry name" value="AICARFT_IMPCHas"/>
    <property type="match status" value="1"/>
</dbReference>
<dbReference type="SMART" id="SM00851">
    <property type="entry name" value="MGS"/>
    <property type="match status" value="1"/>
</dbReference>
<dbReference type="SUPFAM" id="SSF53927">
    <property type="entry name" value="Cytidine deaminase-like"/>
    <property type="match status" value="1"/>
</dbReference>
<dbReference type="SUPFAM" id="SSF52335">
    <property type="entry name" value="Methylglyoxal synthase-like"/>
    <property type="match status" value="1"/>
</dbReference>
<dbReference type="PROSITE" id="PS51855">
    <property type="entry name" value="MGS"/>
    <property type="match status" value="1"/>
</dbReference>
<evidence type="ECO:0000255" key="1">
    <source>
        <dbReference type="HAMAP-Rule" id="MF_00139"/>
    </source>
</evidence>
<evidence type="ECO:0000255" key="2">
    <source>
        <dbReference type="PROSITE-ProRule" id="PRU01202"/>
    </source>
</evidence>
<name>PUR9_ALCBS</name>
<keyword id="KW-0378">Hydrolase</keyword>
<keyword id="KW-0511">Multifunctional enzyme</keyword>
<keyword id="KW-0658">Purine biosynthesis</keyword>
<keyword id="KW-1185">Reference proteome</keyword>
<keyword id="KW-0808">Transferase</keyword>